<name>Y2661_STAAR</name>
<keyword id="KW-0378">Hydrolase</keyword>
<sequence length="276" mass="30975">METLELQGAKLRYHQVGQGPVLIFIPGANGTGDIFLPLAEQLKDHFTVVAVDRRDYGESELAEPLPDSASNPDSDYRVKRDAQDIAELAKSLSDEPVYILGSSSGSIVAMHVLKDYPEVVKKIAFHEPPINTFLPDSTYWKDKNDDIVHQILTEGLEKGMKTFGETLNIAPIDAKMMSQPADTEEGRIEQYKRTMFWSKFEIRQYTHSDITLDDFTKYSDKITLLNGTDSRGSFPQDVNFYINKETGIPIVDIPGGHLGYIQKPEGFADVLLNMWG</sequence>
<dbReference type="EC" id="3.-.-.-"/>
<dbReference type="EMBL" id="BX571856">
    <property type="protein sequence ID" value="CAG41638.1"/>
    <property type="molecule type" value="Genomic_DNA"/>
</dbReference>
<dbReference type="RefSeq" id="WP_000448898.1">
    <property type="nucleotide sequence ID" value="NC_002952.2"/>
</dbReference>
<dbReference type="SMR" id="Q6GDM0"/>
<dbReference type="ESTHER" id="staau-SA2367">
    <property type="family name" value="6_AlphaBeta_hydrolase"/>
</dbReference>
<dbReference type="KEGG" id="sar:SAR2661"/>
<dbReference type="HOGENOM" id="CLU_083329_0_0_9"/>
<dbReference type="Proteomes" id="UP000000596">
    <property type="component" value="Chromosome"/>
</dbReference>
<dbReference type="GO" id="GO:0016020">
    <property type="term" value="C:membrane"/>
    <property type="evidence" value="ECO:0007669"/>
    <property type="project" value="TreeGrafter"/>
</dbReference>
<dbReference type="GO" id="GO:0016787">
    <property type="term" value="F:hydrolase activity"/>
    <property type="evidence" value="ECO:0007669"/>
    <property type="project" value="UniProtKB-KW"/>
</dbReference>
<dbReference type="Gene3D" id="3.40.50.1820">
    <property type="entry name" value="alpha/beta hydrolase"/>
    <property type="match status" value="1"/>
</dbReference>
<dbReference type="InterPro" id="IPR000073">
    <property type="entry name" value="AB_hydrolase_1"/>
</dbReference>
<dbReference type="InterPro" id="IPR029058">
    <property type="entry name" value="AB_hydrolase_fold"/>
</dbReference>
<dbReference type="InterPro" id="IPR050266">
    <property type="entry name" value="AB_hydrolase_sf"/>
</dbReference>
<dbReference type="PANTHER" id="PTHR43798:SF31">
    <property type="entry name" value="AB HYDROLASE SUPERFAMILY PROTEIN YCLE"/>
    <property type="match status" value="1"/>
</dbReference>
<dbReference type="PANTHER" id="PTHR43798">
    <property type="entry name" value="MONOACYLGLYCEROL LIPASE"/>
    <property type="match status" value="1"/>
</dbReference>
<dbReference type="Pfam" id="PF00561">
    <property type="entry name" value="Abhydrolase_1"/>
    <property type="match status" value="1"/>
</dbReference>
<dbReference type="SUPFAM" id="SSF53474">
    <property type="entry name" value="alpha/beta-Hydrolases"/>
    <property type="match status" value="1"/>
</dbReference>
<protein>
    <recommendedName>
        <fullName>Uncharacterized hydrolase SAR2661</fullName>
        <ecNumber>3.-.-.-</ecNumber>
    </recommendedName>
</protein>
<evidence type="ECO:0000255" key="1"/>
<evidence type="ECO:0000305" key="2"/>
<accession>Q6GDM0</accession>
<organism>
    <name type="scientific">Staphylococcus aureus (strain MRSA252)</name>
    <dbReference type="NCBI Taxonomy" id="282458"/>
    <lineage>
        <taxon>Bacteria</taxon>
        <taxon>Bacillati</taxon>
        <taxon>Bacillota</taxon>
        <taxon>Bacilli</taxon>
        <taxon>Bacillales</taxon>
        <taxon>Staphylococcaceae</taxon>
        <taxon>Staphylococcus</taxon>
    </lineage>
</organism>
<gene>
    <name type="ordered locus">SAR2661</name>
</gene>
<feature type="chain" id="PRO_0000298611" description="Uncharacterized hydrolase SAR2661">
    <location>
        <begin position="1"/>
        <end position="276"/>
    </location>
</feature>
<feature type="domain" description="AB hydrolase-1" evidence="1">
    <location>
        <begin position="20"/>
        <end position="137"/>
    </location>
</feature>
<reference key="1">
    <citation type="journal article" date="2004" name="Proc. Natl. Acad. Sci. U.S.A.">
        <title>Complete genomes of two clinical Staphylococcus aureus strains: evidence for the rapid evolution of virulence and drug resistance.</title>
        <authorList>
            <person name="Holden M.T.G."/>
            <person name="Feil E.J."/>
            <person name="Lindsay J.A."/>
            <person name="Peacock S.J."/>
            <person name="Day N.P.J."/>
            <person name="Enright M.C."/>
            <person name="Foster T.J."/>
            <person name="Moore C.E."/>
            <person name="Hurst L."/>
            <person name="Atkin R."/>
            <person name="Barron A."/>
            <person name="Bason N."/>
            <person name="Bentley S.D."/>
            <person name="Chillingworth C."/>
            <person name="Chillingworth T."/>
            <person name="Churcher C."/>
            <person name="Clark L."/>
            <person name="Corton C."/>
            <person name="Cronin A."/>
            <person name="Doggett J."/>
            <person name="Dowd L."/>
            <person name="Feltwell T."/>
            <person name="Hance Z."/>
            <person name="Harris B."/>
            <person name="Hauser H."/>
            <person name="Holroyd S."/>
            <person name="Jagels K."/>
            <person name="James K.D."/>
            <person name="Lennard N."/>
            <person name="Line A."/>
            <person name="Mayes R."/>
            <person name="Moule S."/>
            <person name="Mungall K."/>
            <person name="Ormond D."/>
            <person name="Quail M.A."/>
            <person name="Rabbinowitsch E."/>
            <person name="Rutherford K.M."/>
            <person name="Sanders M."/>
            <person name="Sharp S."/>
            <person name="Simmonds M."/>
            <person name="Stevens K."/>
            <person name="Whitehead S."/>
            <person name="Barrell B.G."/>
            <person name="Spratt B.G."/>
            <person name="Parkhill J."/>
        </authorList>
    </citation>
    <scope>NUCLEOTIDE SEQUENCE [LARGE SCALE GENOMIC DNA]</scope>
    <source>
        <strain>MRSA252</strain>
    </source>
</reference>
<comment type="similarity">
    <text evidence="2">Belongs to the AB hydrolase superfamily.</text>
</comment>
<proteinExistence type="inferred from homology"/>